<feature type="chain" id="PRO_0000339638" description="ATP synthase subunit beta, chloroplastic">
    <location>
        <begin position="1"/>
        <end position="498"/>
    </location>
</feature>
<feature type="binding site" evidence="1">
    <location>
        <begin position="172"/>
        <end position="179"/>
    </location>
    <ligand>
        <name>ATP</name>
        <dbReference type="ChEBI" id="CHEBI:30616"/>
    </ligand>
</feature>
<accession>A4GYR7</accession>
<sequence>MRINPTTSGPGVSALEKKNLGHIAQIIGPVLDVVFPPGKMPNIYNALVVKGRDTVSQQINVTCEVQQLLGNNRVRAVAMSATDGLMRGMEVIDTGAPLSVPVGGATLGRIFNVLGEPVDDLGPVDTQITSPIHRSAPAFIQLDTKLSIFETGIKVVDLLAPYRRGGKIGLFGGAGVGKTVLIMELINNIAKAHGGVSVFGGVGERTREGNDLYMEMKESGVINEENIAESKVALVYGQMNEPPGARMRVGLTALTMAEYFRDVNEQDVLLFIDNIFRFVQAGSEVSALLGRMPSAVGYQPTLSTEMGTLQERITSTKEGSITSIQAVYVPADDLTDPAPATTFAHLDATTVLSRGLAAKGIYPAVDPLDSTSTMLQPQIVGEEHYETAQRVKQTLQRYKELQDIIAILGLDELSEEDRLTVARARKIERFLSQPFFVAEVFTGSPGKYVGLAETIRGFKLILSGELDSLPEQAFYLVGNIDEATAKATNLEMENNLKK</sequence>
<name>ATPB_POPTR</name>
<gene>
    <name evidence="1" type="primary">atpB</name>
    <name type="ordered locus">Poptr_cp029</name>
</gene>
<reference key="1">
    <citation type="journal article" date="2006" name="Science">
        <title>The genome of black cottonwood, Populus trichocarpa (Torr. &amp; Gray).</title>
        <authorList>
            <person name="Tuskan G.A."/>
            <person name="Difazio S."/>
            <person name="Jansson S."/>
            <person name="Bohlmann J."/>
            <person name="Grigoriev I."/>
            <person name="Hellsten U."/>
            <person name="Putnam N."/>
            <person name="Ralph S."/>
            <person name="Rombauts S."/>
            <person name="Salamov A."/>
            <person name="Schein J."/>
            <person name="Sterck L."/>
            <person name="Aerts A."/>
            <person name="Bhalerao R.R."/>
            <person name="Bhalerao R.P."/>
            <person name="Blaudez D."/>
            <person name="Boerjan W."/>
            <person name="Brun A."/>
            <person name="Brunner A."/>
            <person name="Busov V."/>
            <person name="Campbell M."/>
            <person name="Carlson J."/>
            <person name="Chalot M."/>
            <person name="Chapman J."/>
            <person name="Chen G.-L."/>
            <person name="Cooper D."/>
            <person name="Coutinho P.M."/>
            <person name="Couturier J."/>
            <person name="Covert S."/>
            <person name="Cronk Q."/>
            <person name="Cunningham R."/>
            <person name="Davis J."/>
            <person name="Degroeve S."/>
            <person name="Dejardin A."/>
            <person name="dePamphilis C.W."/>
            <person name="Detter J."/>
            <person name="Dirks B."/>
            <person name="Dubchak I."/>
            <person name="Duplessis S."/>
            <person name="Ehlting J."/>
            <person name="Ellis B."/>
            <person name="Gendler K."/>
            <person name="Goodstein D."/>
            <person name="Gribskov M."/>
            <person name="Grimwood J."/>
            <person name="Groover A."/>
            <person name="Gunter L."/>
            <person name="Hamberger B."/>
            <person name="Heinze B."/>
            <person name="Helariutta Y."/>
            <person name="Henrissat B."/>
            <person name="Holligan D."/>
            <person name="Holt R."/>
            <person name="Huang W."/>
            <person name="Islam-Faridi N."/>
            <person name="Jones S."/>
            <person name="Jones-Rhoades M."/>
            <person name="Jorgensen R."/>
            <person name="Joshi C."/>
            <person name="Kangasjaervi J."/>
            <person name="Karlsson J."/>
            <person name="Kelleher C."/>
            <person name="Kirkpatrick R."/>
            <person name="Kirst M."/>
            <person name="Kohler A."/>
            <person name="Kalluri U."/>
            <person name="Larimer F."/>
            <person name="Leebens-Mack J."/>
            <person name="Leple J.-C."/>
            <person name="Locascio P."/>
            <person name="Lou Y."/>
            <person name="Lucas S."/>
            <person name="Martin F."/>
            <person name="Montanini B."/>
            <person name="Napoli C."/>
            <person name="Nelson D.R."/>
            <person name="Nelson C."/>
            <person name="Nieminen K."/>
            <person name="Nilsson O."/>
            <person name="Pereda V."/>
            <person name="Peter G."/>
            <person name="Philippe R."/>
            <person name="Pilate G."/>
            <person name="Poliakov A."/>
            <person name="Razumovskaya J."/>
            <person name="Richardson P."/>
            <person name="Rinaldi C."/>
            <person name="Ritland K."/>
            <person name="Rouze P."/>
            <person name="Ryaboy D."/>
            <person name="Schmutz J."/>
            <person name="Schrader J."/>
            <person name="Segerman B."/>
            <person name="Shin H."/>
            <person name="Siddiqui A."/>
            <person name="Sterky F."/>
            <person name="Terry A."/>
            <person name="Tsai C.-J."/>
            <person name="Uberbacher E."/>
            <person name="Unneberg P."/>
            <person name="Vahala J."/>
            <person name="Wall K."/>
            <person name="Wessler S."/>
            <person name="Yang G."/>
            <person name="Yin T."/>
            <person name="Douglas C."/>
            <person name="Marra M."/>
            <person name="Sandberg G."/>
            <person name="Van de Peer Y."/>
            <person name="Rokhsar D.S."/>
        </authorList>
    </citation>
    <scope>NUCLEOTIDE SEQUENCE [LARGE SCALE GENOMIC DNA]</scope>
    <source>
        <strain>cv. Nisqually</strain>
    </source>
</reference>
<keyword id="KW-0066">ATP synthesis</keyword>
<keyword id="KW-0067">ATP-binding</keyword>
<keyword id="KW-0139">CF(1)</keyword>
<keyword id="KW-0150">Chloroplast</keyword>
<keyword id="KW-0375">Hydrogen ion transport</keyword>
<keyword id="KW-0406">Ion transport</keyword>
<keyword id="KW-0472">Membrane</keyword>
<keyword id="KW-0547">Nucleotide-binding</keyword>
<keyword id="KW-0934">Plastid</keyword>
<keyword id="KW-1185">Reference proteome</keyword>
<keyword id="KW-0793">Thylakoid</keyword>
<keyword id="KW-1278">Translocase</keyword>
<keyword id="KW-0813">Transport</keyword>
<comment type="function">
    <text evidence="1">Produces ATP from ADP in the presence of a proton gradient across the membrane. The catalytic sites are hosted primarily by the beta subunits.</text>
</comment>
<comment type="catalytic activity">
    <reaction evidence="1">
        <text>ATP + H2O + 4 H(+)(in) = ADP + phosphate + 5 H(+)(out)</text>
        <dbReference type="Rhea" id="RHEA:57720"/>
        <dbReference type="ChEBI" id="CHEBI:15377"/>
        <dbReference type="ChEBI" id="CHEBI:15378"/>
        <dbReference type="ChEBI" id="CHEBI:30616"/>
        <dbReference type="ChEBI" id="CHEBI:43474"/>
        <dbReference type="ChEBI" id="CHEBI:456216"/>
        <dbReference type="EC" id="7.1.2.2"/>
    </reaction>
</comment>
<comment type="subunit">
    <text evidence="1">F-type ATPases have 2 components, CF(1) - the catalytic core - and CF(0) - the membrane proton channel. CF(1) has five subunits: alpha(3), beta(3), gamma(1), delta(1), epsilon(1). CF(0) has four main subunits: a(1), b(1), b'(1) and c(9-12).</text>
</comment>
<comment type="subcellular location">
    <subcellularLocation>
        <location evidence="1">Plastid</location>
        <location evidence="1">Chloroplast thylakoid membrane</location>
        <topology evidence="1">Peripheral membrane protein</topology>
    </subcellularLocation>
</comment>
<comment type="similarity">
    <text evidence="1">Belongs to the ATPase alpha/beta chains family.</text>
</comment>
<dbReference type="EC" id="7.1.2.2" evidence="1"/>
<dbReference type="EMBL" id="EF489041">
    <property type="protein sequence ID" value="ABO36711.1"/>
    <property type="molecule type" value="Genomic_DNA"/>
</dbReference>
<dbReference type="RefSeq" id="YP_001109508.1">
    <property type="nucleotide sequence ID" value="NC_009143.1"/>
</dbReference>
<dbReference type="SMR" id="A4GYR7"/>
<dbReference type="FunCoup" id="A4GYR7">
    <property type="interactions" value="459"/>
</dbReference>
<dbReference type="STRING" id="3694.A4GYR7"/>
<dbReference type="EnsemblPlants" id="Potri.013G162800.1.v4.1">
    <property type="protein sequence ID" value="Potri.013G162800.1.v4.1"/>
    <property type="gene ID" value="Potri.013G162800.v4.1"/>
</dbReference>
<dbReference type="GeneID" id="4929676"/>
<dbReference type="Gramene" id="Potri.013G162800.1.v4.1">
    <property type="protein sequence ID" value="Potri.013G162800.1.v4.1"/>
    <property type="gene ID" value="Potri.013G162800.v4.1"/>
</dbReference>
<dbReference type="KEGG" id="pop:4929676"/>
<dbReference type="eggNOG" id="KOG1350">
    <property type="taxonomic scope" value="Eukaryota"/>
</dbReference>
<dbReference type="eggNOG" id="KOG1758">
    <property type="taxonomic scope" value="Eukaryota"/>
</dbReference>
<dbReference type="InParanoid" id="A4GYR7"/>
<dbReference type="OMA" id="IDVYFPE"/>
<dbReference type="OrthoDB" id="149879at2759"/>
<dbReference type="Proteomes" id="UP000006729">
    <property type="component" value="Chloroplast"/>
</dbReference>
<dbReference type="ExpressionAtlas" id="A4GYR7">
    <property type="expression patterns" value="baseline and differential"/>
</dbReference>
<dbReference type="GO" id="GO:0009535">
    <property type="term" value="C:chloroplast thylakoid membrane"/>
    <property type="evidence" value="ECO:0007669"/>
    <property type="project" value="UniProtKB-SubCell"/>
</dbReference>
<dbReference type="GO" id="GO:0000325">
    <property type="term" value="C:plant-type vacuole"/>
    <property type="evidence" value="ECO:0000318"/>
    <property type="project" value="GO_Central"/>
</dbReference>
<dbReference type="GO" id="GO:0045259">
    <property type="term" value="C:proton-transporting ATP synthase complex"/>
    <property type="evidence" value="ECO:0007669"/>
    <property type="project" value="UniProtKB-KW"/>
</dbReference>
<dbReference type="GO" id="GO:0005524">
    <property type="term" value="F:ATP binding"/>
    <property type="evidence" value="ECO:0007669"/>
    <property type="project" value="UniProtKB-UniRule"/>
</dbReference>
<dbReference type="GO" id="GO:0016887">
    <property type="term" value="F:ATP hydrolysis activity"/>
    <property type="evidence" value="ECO:0007669"/>
    <property type="project" value="InterPro"/>
</dbReference>
<dbReference type="GO" id="GO:0046933">
    <property type="term" value="F:proton-transporting ATP synthase activity, rotational mechanism"/>
    <property type="evidence" value="ECO:0007669"/>
    <property type="project" value="UniProtKB-UniRule"/>
</dbReference>
<dbReference type="GO" id="GO:0046961">
    <property type="term" value="F:proton-transporting ATPase activity, rotational mechanism"/>
    <property type="evidence" value="ECO:0000318"/>
    <property type="project" value="GO_Central"/>
</dbReference>
<dbReference type="GO" id="GO:1902600">
    <property type="term" value="P:proton transmembrane transport"/>
    <property type="evidence" value="ECO:0000318"/>
    <property type="project" value="GO_Central"/>
</dbReference>
<dbReference type="CDD" id="cd18110">
    <property type="entry name" value="ATP-synt_F1_beta_C"/>
    <property type="match status" value="1"/>
</dbReference>
<dbReference type="CDD" id="cd18115">
    <property type="entry name" value="ATP-synt_F1_beta_N"/>
    <property type="match status" value="1"/>
</dbReference>
<dbReference type="CDD" id="cd01133">
    <property type="entry name" value="F1-ATPase_beta_CD"/>
    <property type="match status" value="1"/>
</dbReference>
<dbReference type="FunFam" id="1.10.1140.10:FF:000001">
    <property type="entry name" value="ATP synthase subunit beta"/>
    <property type="match status" value="1"/>
</dbReference>
<dbReference type="FunFam" id="3.40.50.12240:FF:000006">
    <property type="entry name" value="ATP synthase subunit beta"/>
    <property type="match status" value="1"/>
</dbReference>
<dbReference type="FunFam" id="3.40.50.300:FF:000026">
    <property type="entry name" value="ATP synthase subunit beta"/>
    <property type="match status" value="1"/>
</dbReference>
<dbReference type="FunFam" id="2.40.10.170:FF:000002">
    <property type="entry name" value="ATP synthase subunit beta, chloroplastic"/>
    <property type="match status" value="1"/>
</dbReference>
<dbReference type="Gene3D" id="2.40.10.170">
    <property type="match status" value="1"/>
</dbReference>
<dbReference type="Gene3D" id="1.10.1140.10">
    <property type="entry name" value="Bovine Mitochondrial F1-atpase, Atp Synthase Beta Chain, Chain D, domain 3"/>
    <property type="match status" value="1"/>
</dbReference>
<dbReference type="Gene3D" id="3.40.50.300">
    <property type="entry name" value="P-loop containing nucleotide triphosphate hydrolases"/>
    <property type="match status" value="1"/>
</dbReference>
<dbReference type="HAMAP" id="MF_01347">
    <property type="entry name" value="ATP_synth_beta_bact"/>
    <property type="match status" value="1"/>
</dbReference>
<dbReference type="InterPro" id="IPR003593">
    <property type="entry name" value="AAA+_ATPase"/>
</dbReference>
<dbReference type="InterPro" id="IPR055190">
    <property type="entry name" value="ATP-synt_VA_C"/>
</dbReference>
<dbReference type="InterPro" id="IPR005722">
    <property type="entry name" value="ATP_synth_F1_bsu"/>
</dbReference>
<dbReference type="InterPro" id="IPR020003">
    <property type="entry name" value="ATPase_a/bsu_AS"/>
</dbReference>
<dbReference type="InterPro" id="IPR050053">
    <property type="entry name" value="ATPase_alpha/beta_chains"/>
</dbReference>
<dbReference type="InterPro" id="IPR004100">
    <property type="entry name" value="ATPase_F1/V1/A1_a/bsu_N"/>
</dbReference>
<dbReference type="InterPro" id="IPR036121">
    <property type="entry name" value="ATPase_F1/V1/A1_a/bsu_N_sf"/>
</dbReference>
<dbReference type="InterPro" id="IPR000194">
    <property type="entry name" value="ATPase_F1/V1/A1_a/bsu_nucl-bd"/>
</dbReference>
<dbReference type="InterPro" id="IPR024034">
    <property type="entry name" value="ATPase_F1/V1_b/a_C"/>
</dbReference>
<dbReference type="InterPro" id="IPR027417">
    <property type="entry name" value="P-loop_NTPase"/>
</dbReference>
<dbReference type="NCBIfam" id="TIGR01039">
    <property type="entry name" value="atpD"/>
    <property type="match status" value="1"/>
</dbReference>
<dbReference type="PANTHER" id="PTHR15184">
    <property type="entry name" value="ATP SYNTHASE"/>
    <property type="match status" value="1"/>
</dbReference>
<dbReference type="PANTHER" id="PTHR15184:SF71">
    <property type="entry name" value="ATP SYNTHASE SUBUNIT BETA, MITOCHONDRIAL"/>
    <property type="match status" value="1"/>
</dbReference>
<dbReference type="Pfam" id="PF00006">
    <property type="entry name" value="ATP-synt_ab"/>
    <property type="match status" value="1"/>
</dbReference>
<dbReference type="Pfam" id="PF02874">
    <property type="entry name" value="ATP-synt_ab_N"/>
    <property type="match status" value="1"/>
</dbReference>
<dbReference type="Pfam" id="PF22919">
    <property type="entry name" value="ATP-synt_VA_C"/>
    <property type="match status" value="1"/>
</dbReference>
<dbReference type="SMART" id="SM00382">
    <property type="entry name" value="AAA"/>
    <property type="match status" value="1"/>
</dbReference>
<dbReference type="SUPFAM" id="SSF47917">
    <property type="entry name" value="C-terminal domain of alpha and beta subunits of F1 ATP synthase"/>
    <property type="match status" value="1"/>
</dbReference>
<dbReference type="SUPFAM" id="SSF50615">
    <property type="entry name" value="N-terminal domain of alpha and beta subunits of F1 ATP synthase"/>
    <property type="match status" value="1"/>
</dbReference>
<dbReference type="SUPFAM" id="SSF52540">
    <property type="entry name" value="P-loop containing nucleoside triphosphate hydrolases"/>
    <property type="match status" value="1"/>
</dbReference>
<dbReference type="PROSITE" id="PS00152">
    <property type="entry name" value="ATPASE_ALPHA_BETA"/>
    <property type="match status" value="1"/>
</dbReference>
<evidence type="ECO:0000255" key="1">
    <source>
        <dbReference type="HAMAP-Rule" id="MF_01347"/>
    </source>
</evidence>
<protein>
    <recommendedName>
        <fullName evidence="1">ATP synthase subunit beta, chloroplastic</fullName>
        <ecNumber evidence="1">7.1.2.2</ecNumber>
    </recommendedName>
    <alternativeName>
        <fullName evidence="1">ATP synthase F1 sector subunit beta</fullName>
    </alternativeName>
    <alternativeName>
        <fullName evidence="1">F-ATPase subunit beta</fullName>
    </alternativeName>
</protein>
<proteinExistence type="inferred from homology"/>
<geneLocation type="chloroplast"/>
<organism>
    <name type="scientific">Populus trichocarpa</name>
    <name type="common">Western balsam poplar</name>
    <name type="synonym">Populus balsamifera subsp. trichocarpa</name>
    <dbReference type="NCBI Taxonomy" id="3694"/>
    <lineage>
        <taxon>Eukaryota</taxon>
        <taxon>Viridiplantae</taxon>
        <taxon>Streptophyta</taxon>
        <taxon>Embryophyta</taxon>
        <taxon>Tracheophyta</taxon>
        <taxon>Spermatophyta</taxon>
        <taxon>Magnoliopsida</taxon>
        <taxon>eudicotyledons</taxon>
        <taxon>Gunneridae</taxon>
        <taxon>Pentapetalae</taxon>
        <taxon>rosids</taxon>
        <taxon>fabids</taxon>
        <taxon>Malpighiales</taxon>
        <taxon>Salicaceae</taxon>
        <taxon>Saliceae</taxon>
        <taxon>Populus</taxon>
    </lineage>
</organism>